<evidence type="ECO:0000255" key="1">
    <source>
        <dbReference type="HAMAP-Rule" id="MF_00276"/>
    </source>
</evidence>
<organism>
    <name type="scientific">Parvibaculum lavamentivorans (strain DS-1 / DSM 13023 / NCIMB 13966)</name>
    <dbReference type="NCBI Taxonomy" id="402881"/>
    <lineage>
        <taxon>Bacteria</taxon>
        <taxon>Pseudomonadati</taxon>
        <taxon>Pseudomonadota</taxon>
        <taxon>Alphaproteobacteria</taxon>
        <taxon>Hyphomicrobiales</taxon>
        <taxon>Parvibaculaceae</taxon>
        <taxon>Parvibaculum</taxon>
    </lineage>
</organism>
<proteinExistence type="inferred from homology"/>
<feature type="chain" id="PRO_1000078798" description="Potassium-transporting ATPase KdpC subunit">
    <location>
        <begin position="1"/>
        <end position="187"/>
    </location>
</feature>
<feature type="transmembrane region" description="Helical" evidence="1">
    <location>
        <begin position="10"/>
        <end position="30"/>
    </location>
</feature>
<dbReference type="EMBL" id="CP000774">
    <property type="protein sequence ID" value="ABS62638.1"/>
    <property type="molecule type" value="Genomic_DNA"/>
</dbReference>
<dbReference type="RefSeq" id="WP_012109894.1">
    <property type="nucleotide sequence ID" value="NC_009719.1"/>
</dbReference>
<dbReference type="SMR" id="A7HRV5"/>
<dbReference type="STRING" id="402881.Plav_1015"/>
<dbReference type="KEGG" id="pla:Plav_1015"/>
<dbReference type="eggNOG" id="COG2156">
    <property type="taxonomic scope" value="Bacteria"/>
</dbReference>
<dbReference type="HOGENOM" id="CLU_077094_1_0_5"/>
<dbReference type="OrthoDB" id="9788285at2"/>
<dbReference type="Proteomes" id="UP000006377">
    <property type="component" value="Chromosome"/>
</dbReference>
<dbReference type="GO" id="GO:0005886">
    <property type="term" value="C:plasma membrane"/>
    <property type="evidence" value="ECO:0007669"/>
    <property type="project" value="UniProtKB-SubCell"/>
</dbReference>
<dbReference type="GO" id="GO:0005524">
    <property type="term" value="F:ATP binding"/>
    <property type="evidence" value="ECO:0007669"/>
    <property type="project" value="UniProtKB-UniRule"/>
</dbReference>
<dbReference type="GO" id="GO:0008556">
    <property type="term" value="F:P-type potassium transmembrane transporter activity"/>
    <property type="evidence" value="ECO:0007669"/>
    <property type="project" value="InterPro"/>
</dbReference>
<dbReference type="HAMAP" id="MF_00276">
    <property type="entry name" value="KdpC"/>
    <property type="match status" value="1"/>
</dbReference>
<dbReference type="InterPro" id="IPR003820">
    <property type="entry name" value="KdpC"/>
</dbReference>
<dbReference type="PANTHER" id="PTHR30042">
    <property type="entry name" value="POTASSIUM-TRANSPORTING ATPASE C CHAIN"/>
    <property type="match status" value="1"/>
</dbReference>
<dbReference type="PANTHER" id="PTHR30042:SF2">
    <property type="entry name" value="POTASSIUM-TRANSPORTING ATPASE KDPC SUBUNIT"/>
    <property type="match status" value="1"/>
</dbReference>
<dbReference type="Pfam" id="PF02669">
    <property type="entry name" value="KdpC"/>
    <property type="match status" value="1"/>
</dbReference>
<dbReference type="PIRSF" id="PIRSF001296">
    <property type="entry name" value="K_ATPase_KdpC"/>
    <property type="match status" value="1"/>
</dbReference>
<comment type="function">
    <text evidence="1">Part of the high-affinity ATP-driven potassium transport (or Kdp) system, which catalyzes the hydrolysis of ATP coupled with the electrogenic transport of potassium into the cytoplasm. This subunit acts as a catalytic chaperone that increases the ATP-binding affinity of the ATP-hydrolyzing subunit KdpB by the formation of a transient KdpB/KdpC/ATP ternary complex.</text>
</comment>
<comment type="subunit">
    <text evidence="1">The system is composed of three essential subunits: KdpA, KdpB and KdpC.</text>
</comment>
<comment type="subcellular location">
    <subcellularLocation>
        <location evidence="1">Cell inner membrane</location>
        <topology evidence="1">Single-pass membrane protein</topology>
    </subcellularLocation>
</comment>
<comment type="similarity">
    <text evidence="1">Belongs to the KdpC family.</text>
</comment>
<gene>
    <name evidence="1" type="primary">kdpC</name>
    <name type="ordered locus">Plav_1015</name>
</gene>
<protein>
    <recommendedName>
        <fullName evidence="1">Potassium-transporting ATPase KdpC subunit</fullName>
    </recommendedName>
    <alternativeName>
        <fullName evidence="1">ATP phosphohydrolase [potassium-transporting] C chain</fullName>
    </alternativeName>
    <alternativeName>
        <fullName evidence="1">Potassium-binding and translocating subunit C</fullName>
    </alternativeName>
    <alternativeName>
        <fullName evidence="1">Potassium-translocating ATPase C chain</fullName>
    </alternativeName>
</protein>
<accession>A7HRV5</accession>
<sequence length="187" mass="19243">MESFIASIRLVAATMLICVAGYSAAVWAVGQVLMPGSAQGSLIAAADGKVIGSSQVAQNFTEPRYFWPRPSAVDYNGAGAGGSNKSPTSTDIADRARETVARYGATAENPLPAELAAASGAGLDPHISERGALYQAARVAQARGLPQAGVEALIHEHAFAPGAFLAPDRLVNVLELNLALDRVETAG</sequence>
<keyword id="KW-0067">ATP-binding</keyword>
<keyword id="KW-0997">Cell inner membrane</keyword>
<keyword id="KW-1003">Cell membrane</keyword>
<keyword id="KW-0406">Ion transport</keyword>
<keyword id="KW-0472">Membrane</keyword>
<keyword id="KW-0547">Nucleotide-binding</keyword>
<keyword id="KW-0630">Potassium</keyword>
<keyword id="KW-0633">Potassium transport</keyword>
<keyword id="KW-1185">Reference proteome</keyword>
<keyword id="KW-0812">Transmembrane</keyword>
<keyword id="KW-1133">Transmembrane helix</keyword>
<keyword id="KW-0813">Transport</keyword>
<reference key="1">
    <citation type="journal article" date="2011" name="Stand. Genomic Sci.">
        <title>Complete genome sequence of Parvibaculum lavamentivorans type strain (DS-1(T)).</title>
        <authorList>
            <person name="Schleheck D."/>
            <person name="Weiss M."/>
            <person name="Pitluck S."/>
            <person name="Bruce D."/>
            <person name="Land M.L."/>
            <person name="Han S."/>
            <person name="Saunders E."/>
            <person name="Tapia R."/>
            <person name="Detter C."/>
            <person name="Brettin T."/>
            <person name="Han J."/>
            <person name="Woyke T."/>
            <person name="Goodwin L."/>
            <person name="Pennacchio L."/>
            <person name="Nolan M."/>
            <person name="Cook A.M."/>
            <person name="Kjelleberg S."/>
            <person name="Thomas T."/>
        </authorList>
    </citation>
    <scope>NUCLEOTIDE SEQUENCE [LARGE SCALE GENOMIC DNA]</scope>
    <source>
        <strain>DS-1 / DSM 13023 / NCIMB 13966</strain>
    </source>
</reference>
<name>KDPC_PARL1</name>